<dbReference type="EMBL" id="Z75284">
    <property type="status" value="NOT_ANNOTATED_CDS"/>
    <property type="molecule type" value="Genomic_DNA"/>
</dbReference>
<dbReference type="EMBL" id="BK006948">
    <property type="protein sequence ID" value="DAA11135.1"/>
    <property type="molecule type" value="Genomic_DNA"/>
</dbReference>
<dbReference type="RefSeq" id="NP_878176.1">
    <property type="nucleotide sequence ID" value="NM_001184578.1"/>
</dbReference>
<dbReference type="BioGRID" id="37030">
    <property type="interactions" value="37"/>
</dbReference>
<dbReference type="FunCoup" id="Q3E805">
    <property type="interactions" value="8"/>
</dbReference>
<dbReference type="STRING" id="4932.YOR376W-A"/>
<dbReference type="PaxDb" id="4932-YOR376W-A"/>
<dbReference type="EnsemblFungi" id="YOR376W-A_mRNA">
    <property type="protein sequence ID" value="YOR376W-A"/>
    <property type="gene ID" value="YOR376W-A"/>
</dbReference>
<dbReference type="GeneID" id="1466488"/>
<dbReference type="KEGG" id="sce:YOR376W-A"/>
<dbReference type="AGR" id="SGD:S000028586"/>
<dbReference type="SGD" id="S000028586">
    <property type="gene designation" value="YOR376W-A"/>
</dbReference>
<dbReference type="VEuPathDB" id="FungiDB:YOR376W-A"/>
<dbReference type="HOGENOM" id="CLU_3108209_0_0_1"/>
<dbReference type="InParanoid" id="Q3E805"/>
<dbReference type="OrthoDB" id="10268146at2759"/>
<dbReference type="BioCyc" id="YEAST:G3O-33903-MONOMER"/>
<dbReference type="BioGRID-ORCS" id="1466488">
    <property type="hits" value="1 hit in 10 CRISPR screens"/>
</dbReference>
<dbReference type="PRO" id="PR:Q3E805"/>
<dbReference type="Proteomes" id="UP000002311">
    <property type="component" value="Chromosome XV"/>
</dbReference>
<dbReference type="RNAct" id="Q3E805">
    <property type="molecule type" value="protein"/>
</dbReference>
<name>YO376_YEAST</name>
<sequence length="51" mass="6214">MTFHLGWTILWYNQAYLEVWATVFQDEMHKYSLHPQSRDAKTKFCCCIPFK</sequence>
<feature type="chain" id="PRO_0000244634" description="Uncharacterized protein YOR376W-A">
    <location>
        <begin position="1"/>
        <end position="51"/>
    </location>
</feature>
<reference key="1">
    <citation type="journal article" date="1997" name="Nature">
        <title>The nucleotide sequence of Saccharomyces cerevisiae chromosome XV.</title>
        <authorList>
            <person name="Dujon B."/>
            <person name="Albermann K."/>
            <person name="Aldea M."/>
            <person name="Alexandraki D."/>
            <person name="Ansorge W."/>
            <person name="Arino J."/>
            <person name="Benes V."/>
            <person name="Bohn C."/>
            <person name="Bolotin-Fukuhara M."/>
            <person name="Bordonne R."/>
            <person name="Boyer J."/>
            <person name="Camasses A."/>
            <person name="Casamayor A."/>
            <person name="Casas C."/>
            <person name="Cheret G."/>
            <person name="Cziepluch C."/>
            <person name="Daignan-Fornier B."/>
            <person name="Dang V.-D."/>
            <person name="de Haan M."/>
            <person name="Delius H."/>
            <person name="Durand P."/>
            <person name="Fairhead C."/>
            <person name="Feldmann H."/>
            <person name="Gaillon L."/>
            <person name="Galisson F."/>
            <person name="Gamo F.-J."/>
            <person name="Gancedo C."/>
            <person name="Goffeau A."/>
            <person name="Goulding S.E."/>
            <person name="Grivell L.A."/>
            <person name="Habbig B."/>
            <person name="Hand N.J."/>
            <person name="Hani J."/>
            <person name="Hattenhorst U."/>
            <person name="Hebling U."/>
            <person name="Hernando Y."/>
            <person name="Herrero E."/>
            <person name="Heumann K."/>
            <person name="Hiesel R."/>
            <person name="Hilger F."/>
            <person name="Hofmann B."/>
            <person name="Hollenberg C.P."/>
            <person name="Hughes B."/>
            <person name="Jauniaux J.-C."/>
            <person name="Kalogeropoulos A."/>
            <person name="Katsoulou C."/>
            <person name="Kordes E."/>
            <person name="Lafuente M.J."/>
            <person name="Landt O."/>
            <person name="Louis E.J."/>
            <person name="Maarse A.C."/>
            <person name="Madania A."/>
            <person name="Mannhaupt G."/>
            <person name="Marck C."/>
            <person name="Martin R.P."/>
            <person name="Mewes H.-W."/>
            <person name="Michaux G."/>
            <person name="Paces V."/>
            <person name="Parle-McDermott A.G."/>
            <person name="Pearson B.M."/>
            <person name="Perrin A."/>
            <person name="Pettersson B."/>
            <person name="Poch O."/>
            <person name="Pohl T.M."/>
            <person name="Poirey R."/>
            <person name="Portetelle D."/>
            <person name="Pujol A."/>
            <person name="Purnelle B."/>
            <person name="Ramezani Rad M."/>
            <person name="Rechmann S."/>
            <person name="Schwager C."/>
            <person name="Schweizer M."/>
            <person name="Sor F."/>
            <person name="Sterky F."/>
            <person name="Tarassov I.A."/>
            <person name="Teodoru C."/>
            <person name="Tettelin H."/>
            <person name="Thierry A."/>
            <person name="Tobiasch E."/>
            <person name="Tzermia M."/>
            <person name="Uhlen M."/>
            <person name="Unseld M."/>
            <person name="Valens M."/>
            <person name="Vandenbol M."/>
            <person name="Vetter I."/>
            <person name="Vlcek C."/>
            <person name="Voet M."/>
            <person name="Volckaert G."/>
            <person name="Voss H."/>
            <person name="Wambutt R."/>
            <person name="Wedler H."/>
            <person name="Wiemann S."/>
            <person name="Winsor B."/>
            <person name="Wolfe K.H."/>
            <person name="Zollner A."/>
            <person name="Zumstein E."/>
            <person name="Kleine K."/>
        </authorList>
    </citation>
    <scope>NUCLEOTIDE SEQUENCE [LARGE SCALE GENOMIC DNA]</scope>
    <source>
        <strain>ATCC 204508 / S288c</strain>
    </source>
</reference>
<reference key="2">
    <citation type="journal article" date="2014" name="G3 (Bethesda)">
        <title>The reference genome sequence of Saccharomyces cerevisiae: Then and now.</title>
        <authorList>
            <person name="Engel S.R."/>
            <person name="Dietrich F.S."/>
            <person name="Fisk D.G."/>
            <person name="Binkley G."/>
            <person name="Balakrishnan R."/>
            <person name="Costanzo M.C."/>
            <person name="Dwight S.S."/>
            <person name="Hitz B.C."/>
            <person name="Karra K."/>
            <person name="Nash R.S."/>
            <person name="Weng S."/>
            <person name="Wong E.D."/>
            <person name="Lloyd P."/>
            <person name="Skrzypek M.S."/>
            <person name="Miyasato S.R."/>
            <person name="Simison M."/>
            <person name="Cherry J.M."/>
        </authorList>
    </citation>
    <scope>GENOME REANNOTATION</scope>
    <source>
        <strain>ATCC 204508 / S288c</strain>
    </source>
</reference>
<reference key="3">
    <citation type="journal article" date="2003" name="Genome Res.">
        <title>Systematic discovery of new genes in the Saccharomyces cerevisiae genome.</title>
        <authorList>
            <person name="Kessler M.M."/>
            <person name="Zeng Q."/>
            <person name="Hogan S."/>
            <person name="Cook R."/>
            <person name="Morales A.J."/>
            <person name="Cottarel G."/>
        </authorList>
    </citation>
    <scope>GENOME REANNOTATION</scope>
</reference>
<keyword id="KW-1185">Reference proteome</keyword>
<gene>
    <name type="ordered locus">YOR376W-A</name>
</gene>
<proteinExistence type="predicted"/>
<organism>
    <name type="scientific">Saccharomyces cerevisiae (strain ATCC 204508 / S288c)</name>
    <name type="common">Baker's yeast</name>
    <dbReference type="NCBI Taxonomy" id="559292"/>
    <lineage>
        <taxon>Eukaryota</taxon>
        <taxon>Fungi</taxon>
        <taxon>Dikarya</taxon>
        <taxon>Ascomycota</taxon>
        <taxon>Saccharomycotina</taxon>
        <taxon>Saccharomycetes</taxon>
        <taxon>Saccharomycetales</taxon>
        <taxon>Saccharomycetaceae</taxon>
        <taxon>Saccharomyces</taxon>
    </lineage>
</organism>
<protein>
    <recommendedName>
        <fullName>Uncharacterized protein YOR376W-A</fullName>
    </recommendedName>
</protein>
<accession>Q3E805</accession>
<accession>D6W369</accession>